<feature type="chain" id="PRO_0000369683" description="Ribosomal RNA small subunit methyltransferase C">
    <location>
        <begin position="1"/>
        <end position="329"/>
    </location>
</feature>
<name>RSMC_ACTP7</name>
<organism>
    <name type="scientific">Actinobacillus pleuropneumoniae serotype 7 (strain AP76)</name>
    <dbReference type="NCBI Taxonomy" id="537457"/>
    <lineage>
        <taxon>Bacteria</taxon>
        <taxon>Pseudomonadati</taxon>
        <taxon>Pseudomonadota</taxon>
        <taxon>Gammaproteobacteria</taxon>
        <taxon>Pasteurellales</taxon>
        <taxon>Pasteurellaceae</taxon>
        <taxon>Actinobacillus</taxon>
    </lineage>
</organism>
<evidence type="ECO:0000255" key="1">
    <source>
        <dbReference type="HAMAP-Rule" id="MF_01862"/>
    </source>
</evidence>
<proteinExistence type="inferred from homology"/>
<keyword id="KW-0963">Cytoplasm</keyword>
<keyword id="KW-0489">Methyltransferase</keyword>
<keyword id="KW-0698">rRNA processing</keyword>
<keyword id="KW-0949">S-adenosyl-L-methionine</keyword>
<keyword id="KW-0808">Transferase</keyword>
<reference key="1">
    <citation type="submission" date="2008-06" db="EMBL/GenBank/DDBJ databases">
        <title>Genome and proteome analysis of A. pleuropneumoniae serotype 7.</title>
        <authorList>
            <person name="Linke B."/>
            <person name="Buettner F."/>
            <person name="Martinez-Arias R."/>
            <person name="Goesmann A."/>
            <person name="Baltes N."/>
            <person name="Tegetmeyer H."/>
            <person name="Singh M."/>
            <person name="Gerlach G.F."/>
        </authorList>
    </citation>
    <scope>NUCLEOTIDE SEQUENCE [LARGE SCALE GENOMIC DNA]</scope>
    <source>
        <strain>AP76</strain>
    </source>
</reference>
<sequence length="329" mass="36919">MLSLESEVLTRHLPLFANKSILLFGDVRDRFADQIKANAKSVAVFSSYFDYARQYADVSFGLYCEIKAELAVFYWTKNKQECQYQLLQWLSQVDVGQEMLIIGENRAGVRSVEKLLEPYGNIAKIDSARRCGLYHFELQSVPDFDGKKFWKSYRLQDLNIFALPAVFSSAELDDGTQLLLSTFNKADRLKGKVLDLGCGAGVIGASLKQQFEKIKLTMSDIHAMALESSRRTLAENALDGTVVASDVFSNIEERFDLIVSNPPFHDGIDTAYRAVEDLIAQAKQRLNRGGELRIVANAFLPYPDLLDKAFGSHQVIAKSNKFKVYSAKA</sequence>
<gene>
    <name evidence="1" type="primary">rsmC</name>
    <name type="ordered locus">APP7_2092</name>
</gene>
<protein>
    <recommendedName>
        <fullName evidence="1">Ribosomal RNA small subunit methyltransferase C</fullName>
        <ecNumber evidence="1">2.1.1.172</ecNumber>
    </recommendedName>
    <alternativeName>
        <fullName evidence="1">16S rRNA m2G1207 methyltransferase</fullName>
    </alternativeName>
    <alternativeName>
        <fullName evidence="1">rRNA (guanine-N(2)-)-methyltransferase RsmC</fullName>
    </alternativeName>
</protein>
<comment type="function">
    <text evidence="1">Specifically methylates the guanine in position 1207 of 16S rRNA in the 30S particle.</text>
</comment>
<comment type="catalytic activity">
    <reaction evidence="1">
        <text>guanosine(1207) in 16S rRNA + S-adenosyl-L-methionine = N(2)-methylguanosine(1207) in 16S rRNA + S-adenosyl-L-homocysteine + H(+)</text>
        <dbReference type="Rhea" id="RHEA:42736"/>
        <dbReference type="Rhea" id="RHEA-COMP:10213"/>
        <dbReference type="Rhea" id="RHEA-COMP:10214"/>
        <dbReference type="ChEBI" id="CHEBI:15378"/>
        <dbReference type="ChEBI" id="CHEBI:57856"/>
        <dbReference type="ChEBI" id="CHEBI:59789"/>
        <dbReference type="ChEBI" id="CHEBI:74269"/>
        <dbReference type="ChEBI" id="CHEBI:74481"/>
        <dbReference type="EC" id="2.1.1.172"/>
    </reaction>
</comment>
<comment type="subunit">
    <text evidence="1">Monomer.</text>
</comment>
<comment type="subcellular location">
    <subcellularLocation>
        <location evidence="1">Cytoplasm</location>
    </subcellularLocation>
</comment>
<comment type="similarity">
    <text evidence="1">Belongs to the methyltransferase superfamily. RsmC family.</text>
</comment>
<accession>B3GZF1</accession>
<dbReference type="EC" id="2.1.1.172" evidence="1"/>
<dbReference type="EMBL" id="CP001091">
    <property type="protein sequence ID" value="ACE62744.1"/>
    <property type="molecule type" value="Genomic_DNA"/>
</dbReference>
<dbReference type="RefSeq" id="WP_012478618.1">
    <property type="nucleotide sequence ID" value="NC_010939.1"/>
</dbReference>
<dbReference type="SMR" id="B3GZF1"/>
<dbReference type="KEGG" id="apa:APP7_2092"/>
<dbReference type="HOGENOM" id="CLU_049581_0_1_6"/>
<dbReference type="Proteomes" id="UP000001226">
    <property type="component" value="Chromosome"/>
</dbReference>
<dbReference type="GO" id="GO:0005737">
    <property type="term" value="C:cytoplasm"/>
    <property type="evidence" value="ECO:0007669"/>
    <property type="project" value="UniProtKB-SubCell"/>
</dbReference>
<dbReference type="GO" id="GO:0052914">
    <property type="term" value="F:16S rRNA (guanine(1207)-N(2))-methyltransferase activity"/>
    <property type="evidence" value="ECO:0007669"/>
    <property type="project" value="UniProtKB-EC"/>
</dbReference>
<dbReference type="GO" id="GO:0003676">
    <property type="term" value="F:nucleic acid binding"/>
    <property type="evidence" value="ECO:0007669"/>
    <property type="project" value="InterPro"/>
</dbReference>
<dbReference type="CDD" id="cd02440">
    <property type="entry name" value="AdoMet_MTases"/>
    <property type="match status" value="1"/>
</dbReference>
<dbReference type="Gene3D" id="3.40.50.150">
    <property type="entry name" value="Vaccinia Virus protein VP39"/>
    <property type="match status" value="2"/>
</dbReference>
<dbReference type="HAMAP" id="MF_01862">
    <property type="entry name" value="16SrRNA_methyltr_C"/>
    <property type="match status" value="1"/>
</dbReference>
<dbReference type="InterPro" id="IPR002052">
    <property type="entry name" value="DNA_methylase_N6_adenine_CS"/>
</dbReference>
<dbReference type="InterPro" id="IPR013675">
    <property type="entry name" value="Mtase_sm_N"/>
</dbReference>
<dbReference type="InterPro" id="IPR023543">
    <property type="entry name" value="rRNA_ssu_MeTfrase_C"/>
</dbReference>
<dbReference type="InterPro" id="IPR046977">
    <property type="entry name" value="RsmC/RlmG"/>
</dbReference>
<dbReference type="InterPro" id="IPR029063">
    <property type="entry name" value="SAM-dependent_MTases_sf"/>
</dbReference>
<dbReference type="InterPro" id="IPR007848">
    <property type="entry name" value="Small_mtfrase_dom"/>
</dbReference>
<dbReference type="NCBIfam" id="NF007023">
    <property type="entry name" value="PRK09489.1"/>
    <property type="match status" value="1"/>
</dbReference>
<dbReference type="PANTHER" id="PTHR47816">
    <property type="entry name" value="RIBOSOMAL RNA SMALL SUBUNIT METHYLTRANSFERASE C"/>
    <property type="match status" value="1"/>
</dbReference>
<dbReference type="PANTHER" id="PTHR47816:SF4">
    <property type="entry name" value="RIBOSOMAL RNA SMALL SUBUNIT METHYLTRANSFERASE C"/>
    <property type="match status" value="1"/>
</dbReference>
<dbReference type="Pfam" id="PF05175">
    <property type="entry name" value="MTS"/>
    <property type="match status" value="1"/>
</dbReference>
<dbReference type="Pfam" id="PF08468">
    <property type="entry name" value="MTS_N"/>
    <property type="match status" value="1"/>
</dbReference>
<dbReference type="SUPFAM" id="SSF53335">
    <property type="entry name" value="S-adenosyl-L-methionine-dependent methyltransferases"/>
    <property type="match status" value="1"/>
</dbReference>